<protein>
    <recommendedName>
        <fullName evidence="1">dCTP deaminase</fullName>
        <ecNumber evidence="1">3.5.4.13</ecNumber>
    </recommendedName>
    <alternativeName>
        <fullName evidence="1">Deoxycytidine triphosphate deaminase</fullName>
    </alternativeName>
</protein>
<sequence>MRLCDTDIERYLDDGIIALTPRPSNDKINGATIDVRLGNSFRVFREHSAPYIDLSGPKEQVSAQLESVMSEEILIGENDAFFLHPGELALATTLESVKLPANIIGWLDGRSSLARLGLMVHVTAHRIDPGWEGRIVLEFFNSGKLPLALRPNMVIGALSFEILSGYAARPYSSRKNAKYKNQQSAVASRIDEDK</sequence>
<evidence type="ECO:0000255" key="1">
    <source>
        <dbReference type="HAMAP-Rule" id="MF_00146"/>
    </source>
</evidence>
<reference key="1">
    <citation type="journal article" date="2001" name="Proc. Natl. Acad. Sci. U.S.A.">
        <title>Complete genomic sequence of Pasteurella multocida Pm70.</title>
        <authorList>
            <person name="May B.J."/>
            <person name="Zhang Q."/>
            <person name="Li L.L."/>
            <person name="Paustian M.L."/>
            <person name="Whittam T.S."/>
            <person name="Kapur V."/>
        </authorList>
    </citation>
    <scope>NUCLEOTIDE SEQUENCE [LARGE SCALE GENOMIC DNA]</scope>
    <source>
        <strain>Pm70</strain>
    </source>
</reference>
<accession>P57891</accession>
<feature type="chain" id="PRO_0000156001" description="dCTP deaminase">
    <location>
        <begin position="1"/>
        <end position="194"/>
    </location>
</feature>
<feature type="active site" description="Proton donor/acceptor" evidence="1">
    <location>
        <position position="138"/>
    </location>
</feature>
<feature type="binding site" evidence="1">
    <location>
        <begin position="110"/>
        <end position="115"/>
    </location>
    <ligand>
        <name>dCTP</name>
        <dbReference type="ChEBI" id="CHEBI:61481"/>
    </ligand>
</feature>
<feature type="binding site" evidence="1">
    <location>
        <position position="128"/>
    </location>
    <ligand>
        <name>dCTP</name>
        <dbReference type="ChEBI" id="CHEBI:61481"/>
    </ligand>
</feature>
<feature type="binding site" evidence="1">
    <location>
        <begin position="136"/>
        <end position="138"/>
    </location>
    <ligand>
        <name>dCTP</name>
        <dbReference type="ChEBI" id="CHEBI:61481"/>
    </ligand>
</feature>
<feature type="binding site" evidence="1">
    <location>
        <position position="171"/>
    </location>
    <ligand>
        <name>dCTP</name>
        <dbReference type="ChEBI" id="CHEBI:61481"/>
    </ligand>
</feature>
<feature type="binding site" evidence="1">
    <location>
        <position position="178"/>
    </location>
    <ligand>
        <name>dCTP</name>
        <dbReference type="ChEBI" id="CHEBI:61481"/>
    </ligand>
</feature>
<feature type="binding site" evidence="1">
    <location>
        <position position="182"/>
    </location>
    <ligand>
        <name>dCTP</name>
        <dbReference type="ChEBI" id="CHEBI:61481"/>
    </ligand>
</feature>
<dbReference type="EC" id="3.5.4.13" evidence="1"/>
<dbReference type="EMBL" id="AE004439">
    <property type="protein sequence ID" value="AAK03035.1"/>
    <property type="molecule type" value="Genomic_DNA"/>
</dbReference>
<dbReference type="RefSeq" id="WP_005717106.1">
    <property type="nucleotide sequence ID" value="NC_002663.1"/>
</dbReference>
<dbReference type="SMR" id="P57891"/>
<dbReference type="STRING" id="272843.PM0951"/>
<dbReference type="EnsemblBacteria" id="AAK03035">
    <property type="protein sequence ID" value="AAK03035"/>
    <property type="gene ID" value="PM0951"/>
</dbReference>
<dbReference type="GeneID" id="77206258"/>
<dbReference type="KEGG" id="pmu:PM0951"/>
<dbReference type="HOGENOM" id="CLU_087476_2_0_6"/>
<dbReference type="OrthoDB" id="9780956at2"/>
<dbReference type="UniPathway" id="UPA00610">
    <property type="reaction ID" value="UER00665"/>
</dbReference>
<dbReference type="Proteomes" id="UP000000809">
    <property type="component" value="Chromosome"/>
</dbReference>
<dbReference type="GO" id="GO:0008829">
    <property type="term" value="F:dCTP deaminase activity"/>
    <property type="evidence" value="ECO:0007669"/>
    <property type="project" value="UniProtKB-UniRule"/>
</dbReference>
<dbReference type="GO" id="GO:0000166">
    <property type="term" value="F:nucleotide binding"/>
    <property type="evidence" value="ECO:0007669"/>
    <property type="project" value="UniProtKB-KW"/>
</dbReference>
<dbReference type="GO" id="GO:0006226">
    <property type="term" value="P:dUMP biosynthetic process"/>
    <property type="evidence" value="ECO:0007669"/>
    <property type="project" value="UniProtKB-UniPathway"/>
</dbReference>
<dbReference type="GO" id="GO:0006229">
    <property type="term" value="P:dUTP biosynthetic process"/>
    <property type="evidence" value="ECO:0007669"/>
    <property type="project" value="UniProtKB-UniRule"/>
</dbReference>
<dbReference type="GO" id="GO:0015949">
    <property type="term" value="P:nucleobase-containing small molecule interconversion"/>
    <property type="evidence" value="ECO:0007669"/>
    <property type="project" value="TreeGrafter"/>
</dbReference>
<dbReference type="CDD" id="cd07557">
    <property type="entry name" value="trimeric_dUTPase"/>
    <property type="match status" value="1"/>
</dbReference>
<dbReference type="FunFam" id="2.70.40.10:FF:000003">
    <property type="entry name" value="dCTP deaminase"/>
    <property type="match status" value="1"/>
</dbReference>
<dbReference type="Gene3D" id="2.70.40.10">
    <property type="match status" value="1"/>
</dbReference>
<dbReference type="HAMAP" id="MF_00146">
    <property type="entry name" value="dCTP_deaminase"/>
    <property type="match status" value="1"/>
</dbReference>
<dbReference type="InterPro" id="IPR011962">
    <property type="entry name" value="dCTP_deaminase"/>
</dbReference>
<dbReference type="InterPro" id="IPR036157">
    <property type="entry name" value="dUTPase-like_sf"/>
</dbReference>
<dbReference type="InterPro" id="IPR033704">
    <property type="entry name" value="dUTPase_trimeric"/>
</dbReference>
<dbReference type="NCBIfam" id="TIGR02274">
    <property type="entry name" value="dCTP_deam"/>
    <property type="match status" value="1"/>
</dbReference>
<dbReference type="PANTHER" id="PTHR42680">
    <property type="entry name" value="DCTP DEAMINASE"/>
    <property type="match status" value="1"/>
</dbReference>
<dbReference type="PANTHER" id="PTHR42680:SF3">
    <property type="entry name" value="DCTP DEAMINASE"/>
    <property type="match status" value="1"/>
</dbReference>
<dbReference type="Pfam" id="PF22769">
    <property type="entry name" value="DCD"/>
    <property type="match status" value="1"/>
</dbReference>
<dbReference type="SUPFAM" id="SSF51283">
    <property type="entry name" value="dUTPase-like"/>
    <property type="match status" value="1"/>
</dbReference>
<name>DCD_PASMU</name>
<gene>
    <name evidence="1" type="primary">dcd</name>
    <name type="ordered locus">PM0951</name>
</gene>
<comment type="function">
    <text evidence="1">Catalyzes the deamination of dCTP to dUTP.</text>
</comment>
<comment type="catalytic activity">
    <reaction evidence="1">
        <text>dCTP + H2O + H(+) = dUTP + NH4(+)</text>
        <dbReference type="Rhea" id="RHEA:22680"/>
        <dbReference type="ChEBI" id="CHEBI:15377"/>
        <dbReference type="ChEBI" id="CHEBI:15378"/>
        <dbReference type="ChEBI" id="CHEBI:28938"/>
        <dbReference type="ChEBI" id="CHEBI:61481"/>
        <dbReference type="ChEBI" id="CHEBI:61555"/>
        <dbReference type="EC" id="3.5.4.13"/>
    </reaction>
</comment>
<comment type="pathway">
    <text evidence="1">Pyrimidine metabolism; dUMP biosynthesis; dUMP from dCTP (dUTP route): step 1/2.</text>
</comment>
<comment type="subunit">
    <text evidence="1">Homotrimer.</text>
</comment>
<comment type="similarity">
    <text evidence="1">Belongs to the dCTP deaminase family.</text>
</comment>
<keyword id="KW-0378">Hydrolase</keyword>
<keyword id="KW-0546">Nucleotide metabolism</keyword>
<keyword id="KW-0547">Nucleotide-binding</keyword>
<keyword id="KW-1185">Reference proteome</keyword>
<organism>
    <name type="scientific">Pasteurella multocida (strain Pm70)</name>
    <dbReference type="NCBI Taxonomy" id="272843"/>
    <lineage>
        <taxon>Bacteria</taxon>
        <taxon>Pseudomonadati</taxon>
        <taxon>Pseudomonadota</taxon>
        <taxon>Gammaproteobacteria</taxon>
        <taxon>Pasteurellales</taxon>
        <taxon>Pasteurellaceae</taxon>
        <taxon>Pasteurella</taxon>
    </lineage>
</organism>
<proteinExistence type="inferred from homology"/>